<name>NDBX_TITPA</name>
<organism>
    <name type="scientific">Tityus pachyurus</name>
    <name type="common">Colombian scorpion</name>
    <dbReference type="NCBI Taxonomy" id="288781"/>
    <lineage>
        <taxon>Eukaryota</taxon>
        <taxon>Metazoa</taxon>
        <taxon>Ecdysozoa</taxon>
        <taxon>Arthropoda</taxon>
        <taxon>Chelicerata</taxon>
        <taxon>Arachnida</taxon>
        <taxon>Scorpiones</taxon>
        <taxon>Buthida</taxon>
        <taxon>Buthoidea</taxon>
        <taxon>Buthidae</taxon>
        <taxon>Tityus</taxon>
    </lineage>
</organism>
<dbReference type="GO" id="GO:0005576">
    <property type="term" value="C:extracellular region"/>
    <property type="evidence" value="ECO:0007669"/>
    <property type="project" value="UniProtKB-SubCell"/>
</dbReference>
<feature type="peptide" id="PRO_0000422254" description="Toxin Tpa3">
    <location>
        <begin position="1"/>
        <end position="25"/>
    </location>
</feature>
<reference key="1">
    <citation type="journal article" date="2006" name="Biochim. Biophys. Acta">
        <title>Proteomic analysis of the venom and characterization of toxins specific for Na+ - and K+ -channels from the Colombian scorpion Tityus pachyurus.</title>
        <authorList>
            <person name="Barona J."/>
            <person name="Batista C.V.F."/>
            <person name="Zamudio F.Z."/>
            <person name="Gomez-Lagunas F."/>
            <person name="Wanke E."/>
            <person name="Otero R."/>
            <person name="Possani L.D."/>
        </authorList>
    </citation>
    <scope>PROTEIN SEQUENCE</scope>
    <scope>SUBCELLULAR LOCATION</scope>
    <scope>MASS SPECTROMETRY</scope>
    <source>
        <tissue>Venom</tissue>
    </source>
</reference>
<evidence type="ECO:0000269" key="1">
    <source>
    </source>
</evidence>
<evidence type="ECO:0000305" key="2"/>
<evidence type="ECO:0000305" key="3">
    <source>
    </source>
</evidence>
<sequence>ADDDLEGFSEEDLKAIKEHRAGLAA</sequence>
<proteinExistence type="evidence at protein level"/>
<comment type="function">
    <text>Unknown. Is not toxic to mammals.</text>
</comment>
<comment type="subcellular location">
    <subcellularLocation>
        <location evidence="1">Secreted</location>
    </subcellularLocation>
</comment>
<comment type="tissue specificity">
    <text evidence="2">Expressed by the venom gland.</text>
</comment>
<comment type="mass spectrometry"/>
<comment type="miscellaneous">
    <text evidence="3">Elutes at 29.62 minutes.</text>
</comment>
<comment type="similarity">
    <text evidence="2">Belongs to the non-disulfide-bridged peptide (NDBP) superfamily.</text>
</comment>
<accession>P0DL22</accession>
<keyword id="KW-0903">Direct protein sequencing</keyword>
<keyword id="KW-0964">Secreted</keyword>
<protein>
    <recommendedName>
        <fullName>Toxin Tpa3</fullName>
    </recommendedName>
</protein>